<name>RRF_STRSY</name>
<gene>
    <name evidence="1" type="primary">frr</name>
    <name type="ordered locus">SSU05_1326</name>
</gene>
<sequence>MSKEIIAKAQERMNQSHQSLAREFSHIRAGRANASLLDRISVEYYGSPTPLNQLAGITVPEARVLLITPFDKSILKDIERALNASDLGLTPQSDGTVIRLVIPALTEETRKNLAKDVKKVGENSKVAIRNIRRDAMDEAKKAEKAKEITEDELKTLEKDIQKVTDDAIKTIDKMTADKEKELLEV</sequence>
<protein>
    <recommendedName>
        <fullName evidence="1">Ribosome-recycling factor</fullName>
        <shortName evidence="1">RRF</shortName>
    </recommendedName>
    <alternativeName>
        <fullName evidence="1">Ribosome-releasing factor</fullName>
    </alternativeName>
</protein>
<keyword id="KW-0963">Cytoplasm</keyword>
<keyword id="KW-0648">Protein biosynthesis</keyword>
<reference key="1">
    <citation type="journal article" date="2007" name="PLoS ONE">
        <title>A glimpse of streptococcal toxic shock syndrome from comparative genomics of S. suis 2 Chinese isolates.</title>
        <authorList>
            <person name="Chen C."/>
            <person name="Tang J."/>
            <person name="Dong W."/>
            <person name="Wang C."/>
            <person name="Feng Y."/>
            <person name="Wang J."/>
            <person name="Zheng F."/>
            <person name="Pan X."/>
            <person name="Liu D."/>
            <person name="Li M."/>
            <person name="Song Y."/>
            <person name="Zhu X."/>
            <person name="Sun H."/>
            <person name="Feng T."/>
            <person name="Guo Z."/>
            <person name="Ju A."/>
            <person name="Ge J."/>
            <person name="Dong Y."/>
            <person name="Sun W."/>
            <person name="Jiang Y."/>
            <person name="Wang J."/>
            <person name="Yan J."/>
            <person name="Yang H."/>
            <person name="Wang X."/>
            <person name="Gao G.F."/>
            <person name="Yang R."/>
            <person name="Wang J."/>
            <person name="Yu J."/>
        </authorList>
    </citation>
    <scope>NUCLEOTIDE SEQUENCE [LARGE SCALE GENOMIC DNA]</scope>
    <source>
        <strain>05ZYH33</strain>
    </source>
</reference>
<evidence type="ECO:0000255" key="1">
    <source>
        <dbReference type="HAMAP-Rule" id="MF_00040"/>
    </source>
</evidence>
<proteinExistence type="inferred from homology"/>
<dbReference type="EMBL" id="CP000407">
    <property type="protein sequence ID" value="ABP90292.1"/>
    <property type="molecule type" value="Genomic_DNA"/>
</dbReference>
<dbReference type="SMR" id="A4VW03"/>
<dbReference type="STRING" id="391295.SSU05_1326"/>
<dbReference type="KEGG" id="ssu:SSU05_1326"/>
<dbReference type="eggNOG" id="COG0233">
    <property type="taxonomic scope" value="Bacteria"/>
</dbReference>
<dbReference type="HOGENOM" id="CLU_073981_2_0_9"/>
<dbReference type="GO" id="GO:0005737">
    <property type="term" value="C:cytoplasm"/>
    <property type="evidence" value="ECO:0007669"/>
    <property type="project" value="UniProtKB-SubCell"/>
</dbReference>
<dbReference type="GO" id="GO:0043023">
    <property type="term" value="F:ribosomal large subunit binding"/>
    <property type="evidence" value="ECO:0007669"/>
    <property type="project" value="TreeGrafter"/>
</dbReference>
<dbReference type="GO" id="GO:0006415">
    <property type="term" value="P:translational termination"/>
    <property type="evidence" value="ECO:0007669"/>
    <property type="project" value="UniProtKB-UniRule"/>
</dbReference>
<dbReference type="CDD" id="cd00520">
    <property type="entry name" value="RRF"/>
    <property type="match status" value="1"/>
</dbReference>
<dbReference type="FunFam" id="1.10.132.20:FF:000001">
    <property type="entry name" value="Ribosome-recycling factor"/>
    <property type="match status" value="1"/>
</dbReference>
<dbReference type="FunFam" id="3.30.1360.40:FF:000001">
    <property type="entry name" value="Ribosome-recycling factor"/>
    <property type="match status" value="1"/>
</dbReference>
<dbReference type="Gene3D" id="3.30.1360.40">
    <property type="match status" value="1"/>
</dbReference>
<dbReference type="Gene3D" id="1.10.132.20">
    <property type="entry name" value="Ribosome-recycling factor"/>
    <property type="match status" value="1"/>
</dbReference>
<dbReference type="HAMAP" id="MF_00040">
    <property type="entry name" value="RRF"/>
    <property type="match status" value="1"/>
</dbReference>
<dbReference type="InterPro" id="IPR002661">
    <property type="entry name" value="Ribosome_recyc_fac"/>
</dbReference>
<dbReference type="InterPro" id="IPR023584">
    <property type="entry name" value="Ribosome_recyc_fac_dom"/>
</dbReference>
<dbReference type="InterPro" id="IPR036191">
    <property type="entry name" value="RRF_sf"/>
</dbReference>
<dbReference type="NCBIfam" id="TIGR00496">
    <property type="entry name" value="frr"/>
    <property type="match status" value="1"/>
</dbReference>
<dbReference type="PANTHER" id="PTHR20982:SF3">
    <property type="entry name" value="MITOCHONDRIAL RIBOSOME RECYCLING FACTOR PSEUDO 1"/>
    <property type="match status" value="1"/>
</dbReference>
<dbReference type="PANTHER" id="PTHR20982">
    <property type="entry name" value="RIBOSOME RECYCLING FACTOR"/>
    <property type="match status" value="1"/>
</dbReference>
<dbReference type="Pfam" id="PF01765">
    <property type="entry name" value="RRF"/>
    <property type="match status" value="1"/>
</dbReference>
<dbReference type="SUPFAM" id="SSF55194">
    <property type="entry name" value="Ribosome recycling factor, RRF"/>
    <property type="match status" value="1"/>
</dbReference>
<comment type="function">
    <text evidence="1">Responsible for the release of ribosomes from messenger RNA at the termination of protein biosynthesis. May increase the efficiency of translation by recycling ribosomes from one round of translation to another.</text>
</comment>
<comment type="subcellular location">
    <subcellularLocation>
        <location evidence="1">Cytoplasm</location>
    </subcellularLocation>
</comment>
<comment type="similarity">
    <text evidence="1">Belongs to the RRF family.</text>
</comment>
<organism>
    <name type="scientific">Streptococcus suis (strain 05ZYH33)</name>
    <dbReference type="NCBI Taxonomy" id="391295"/>
    <lineage>
        <taxon>Bacteria</taxon>
        <taxon>Bacillati</taxon>
        <taxon>Bacillota</taxon>
        <taxon>Bacilli</taxon>
        <taxon>Lactobacillales</taxon>
        <taxon>Streptococcaceae</taxon>
        <taxon>Streptococcus</taxon>
    </lineage>
</organism>
<accession>A4VW03</accession>
<feature type="chain" id="PRO_1000003291" description="Ribosome-recycling factor">
    <location>
        <begin position="1"/>
        <end position="185"/>
    </location>
</feature>